<accession>Q93XE1</accession>
<comment type="function">
    <text>Catalyzes the first step of the osmoprotectant glycine betaine synthesis.</text>
</comment>
<comment type="catalytic activity">
    <reaction>
        <text>choline + 2 reduced [2Fe-2S]-[ferredoxin] + O2 + 2 H(+) = betaine aldehyde hydrate + 2 oxidized [2Fe-2S]-[ferredoxin] + H2O</text>
        <dbReference type="Rhea" id="RHEA:17769"/>
        <dbReference type="Rhea" id="RHEA-COMP:10000"/>
        <dbReference type="Rhea" id="RHEA-COMP:10001"/>
        <dbReference type="ChEBI" id="CHEBI:15354"/>
        <dbReference type="ChEBI" id="CHEBI:15377"/>
        <dbReference type="ChEBI" id="CHEBI:15378"/>
        <dbReference type="ChEBI" id="CHEBI:15379"/>
        <dbReference type="ChEBI" id="CHEBI:15870"/>
        <dbReference type="ChEBI" id="CHEBI:33737"/>
        <dbReference type="ChEBI" id="CHEBI:33738"/>
        <dbReference type="EC" id="1.14.15.7"/>
    </reaction>
</comment>
<comment type="cofactor">
    <cofactor>
        <name>[2Fe-2S] cluster</name>
        <dbReference type="ChEBI" id="CHEBI:190135"/>
    </cofactor>
    <text>Binds 1 [2Fe-2S] cluster.</text>
</comment>
<comment type="cofactor">
    <cofactor evidence="4">
        <name>Fe cation</name>
        <dbReference type="ChEBI" id="CHEBI:24875"/>
    </cofactor>
    <text evidence="4">Binds 1 Fe cation.</text>
</comment>
<comment type="cofactor">
    <cofactor evidence="1">
        <name>Mg(2+)</name>
        <dbReference type="ChEBI" id="CHEBI:18420"/>
    </cofactor>
</comment>
<comment type="pathway">
    <text>Amine and polyamine biosynthesis; betaine biosynthesis via choline pathway; betaine aldehyde from choline (monooxygenase route): step 1/1.</text>
</comment>
<comment type="subcellular location">
    <subcellularLocation>
        <location evidence="1">Plastid</location>
        <location evidence="1">Chloroplast stroma</location>
    </subcellularLocation>
</comment>
<comment type="induction">
    <text>By salt, drought and heat stress.</text>
</comment>
<comment type="similarity">
    <text evidence="4">Belongs to the choline monooxygenase family.</text>
</comment>
<reference key="1">
    <citation type="journal article" date="2001" name="Cell Res.">
        <title>Isolation of a choline monooxygenase cDNA clone from Amaranthus tricolor and its expressions under stress conditions.</title>
        <authorList>
            <person name="Meng Y.L."/>
            <person name="Wang Y.M."/>
            <person name="Zhang B."/>
            <person name="Nii N."/>
        </authorList>
    </citation>
    <scope>NUCLEOTIDE SEQUENCE [MRNA]</scope>
    <source>
        <tissue>Leaf</tissue>
    </source>
</reference>
<sequence>MASSASMLINYPTTFCGVRNSSNPNNDQFSDQINIPSSLNNNINISKITSKTNKIIPKAVASPVIPSSINSNNITTTTPNIKRIIHEFDPKVPAEDGFTPPSTWYTDPSLYSHELDRIFSKGWQVAGYSDQIKEPNQYFTGSLGNVEYLVCRDGQGKVHAFHNVCTHRASILACGTGKKSCFVCPYHGWVFGLDGSLMKATKTENQVFDPKELGLVTLKVAIWGPFVLISLDRSGSEGTEDVGKEWIGSCAEEVKKHAFDPSLQFINRSEFPMESNWKVFCDNYLDSAYHVPYAHKYYAAELDFDTYKTDLLEKVVIQRVASSSNKPNGFDRLGSEAFYAFIYPNFAVERYGPWMTTMHIGPLGPRKCKLVVDYYLENAMMNDKPYIEKSIMINDNVQKEDVVLCESVQRGLETPAYRSGRYVMPIEKGIHHFHCWLHQTLN</sequence>
<gene>
    <name type="primary">CMO</name>
</gene>
<evidence type="ECO:0000250" key="1"/>
<evidence type="ECO:0000255" key="2"/>
<evidence type="ECO:0000255" key="3">
    <source>
        <dbReference type="PROSITE-ProRule" id="PRU00628"/>
    </source>
</evidence>
<evidence type="ECO:0000305" key="4"/>
<proteinExistence type="evidence at transcript level"/>
<keyword id="KW-0001">2Fe-2S</keyword>
<keyword id="KW-0150">Chloroplast</keyword>
<keyword id="KW-0408">Iron</keyword>
<keyword id="KW-0411">Iron-sulfur</keyword>
<keyword id="KW-0460">Magnesium</keyword>
<keyword id="KW-0479">Metal-binding</keyword>
<keyword id="KW-0503">Monooxygenase</keyword>
<keyword id="KW-0560">Oxidoreductase</keyword>
<keyword id="KW-0934">Plastid</keyword>
<keyword id="KW-0346">Stress response</keyword>
<keyword id="KW-0809">Transit peptide</keyword>
<dbReference type="EC" id="1.14.15.7"/>
<dbReference type="EMBL" id="AF290974">
    <property type="protein sequence ID" value="AAK82768.1"/>
    <property type="molecule type" value="mRNA"/>
</dbReference>
<dbReference type="SMR" id="Q93XE1"/>
<dbReference type="BRENDA" id="1.14.15.7">
    <property type="organism ID" value="284"/>
</dbReference>
<dbReference type="UniPathway" id="UPA00529">
    <property type="reaction ID" value="UER00430"/>
</dbReference>
<dbReference type="GO" id="GO:0009570">
    <property type="term" value="C:chloroplast stroma"/>
    <property type="evidence" value="ECO:0007669"/>
    <property type="project" value="UniProtKB-SubCell"/>
</dbReference>
<dbReference type="GO" id="GO:0051537">
    <property type="term" value="F:2 iron, 2 sulfur cluster binding"/>
    <property type="evidence" value="ECO:0007669"/>
    <property type="project" value="UniProtKB-KW"/>
</dbReference>
<dbReference type="GO" id="GO:0019133">
    <property type="term" value="F:choline monooxygenase activity"/>
    <property type="evidence" value="ECO:0007669"/>
    <property type="project" value="UniProtKB-EC"/>
</dbReference>
<dbReference type="GO" id="GO:0005506">
    <property type="term" value="F:iron ion binding"/>
    <property type="evidence" value="ECO:0007669"/>
    <property type="project" value="InterPro"/>
</dbReference>
<dbReference type="GO" id="GO:0019285">
    <property type="term" value="P:glycine betaine biosynthetic process from choline"/>
    <property type="evidence" value="ECO:0007669"/>
    <property type="project" value="UniProtKB-UniPathway"/>
</dbReference>
<dbReference type="CDD" id="cd08883">
    <property type="entry name" value="RHO_alpha_C_CMO-like"/>
    <property type="match status" value="1"/>
</dbReference>
<dbReference type="Gene3D" id="3.90.380.10">
    <property type="entry name" value="Naphthalene 1,2-dioxygenase Alpha Subunit, Chain A, domain 1"/>
    <property type="match status" value="1"/>
</dbReference>
<dbReference type="Gene3D" id="2.102.10.10">
    <property type="entry name" value="Rieske [2Fe-2S] iron-sulphur domain"/>
    <property type="match status" value="1"/>
</dbReference>
<dbReference type="InterPro" id="IPR017941">
    <property type="entry name" value="Rieske_2Fe-2S"/>
</dbReference>
<dbReference type="InterPro" id="IPR036922">
    <property type="entry name" value="Rieske_2Fe-2S_sf"/>
</dbReference>
<dbReference type="InterPro" id="IPR015879">
    <property type="entry name" value="Ring_hydroxy_dOase_asu_C_dom"/>
</dbReference>
<dbReference type="InterPro" id="IPR001663">
    <property type="entry name" value="Rng_hydr_dOase-A"/>
</dbReference>
<dbReference type="PANTHER" id="PTHR43756">
    <property type="entry name" value="CHOLINE MONOOXYGENASE, CHLOROPLASTIC"/>
    <property type="match status" value="1"/>
</dbReference>
<dbReference type="PANTHER" id="PTHR43756:SF5">
    <property type="entry name" value="CHOLINE MONOOXYGENASE, CHLOROPLASTIC"/>
    <property type="match status" value="1"/>
</dbReference>
<dbReference type="Pfam" id="PF00355">
    <property type="entry name" value="Rieske"/>
    <property type="match status" value="1"/>
</dbReference>
<dbReference type="Pfam" id="PF00848">
    <property type="entry name" value="Ring_hydroxyl_A"/>
    <property type="match status" value="1"/>
</dbReference>
<dbReference type="PRINTS" id="PR00090">
    <property type="entry name" value="RNGDIOXGNASE"/>
</dbReference>
<dbReference type="SUPFAM" id="SSF55961">
    <property type="entry name" value="Bet v1-like"/>
    <property type="match status" value="1"/>
</dbReference>
<dbReference type="SUPFAM" id="SSF50022">
    <property type="entry name" value="ISP domain"/>
    <property type="match status" value="1"/>
</dbReference>
<dbReference type="PROSITE" id="PS51296">
    <property type="entry name" value="RIESKE"/>
    <property type="match status" value="1"/>
</dbReference>
<protein>
    <recommendedName>
        <fullName>Choline monooxygenase, chloroplastic</fullName>
        <ecNumber>1.14.15.7</ecNumber>
    </recommendedName>
</protein>
<name>CHMO_AMATR</name>
<feature type="transit peptide" description="Chloroplast" evidence="1">
    <location>
        <begin position="1"/>
        <end position="58"/>
    </location>
</feature>
<feature type="chain" id="PRO_0000020924" description="Choline monooxygenase, chloroplastic">
    <location>
        <begin position="59"/>
        <end position="442"/>
    </location>
</feature>
<feature type="domain" description="Rieske" evidence="3">
    <location>
        <begin position="123"/>
        <end position="229"/>
    </location>
</feature>
<feature type="binding site" evidence="3">
    <location>
        <position position="165"/>
    </location>
    <ligand>
        <name>[2Fe-2S] cluster</name>
        <dbReference type="ChEBI" id="CHEBI:190135"/>
    </ligand>
</feature>
<feature type="binding site" evidence="3">
    <location>
        <position position="167"/>
    </location>
    <ligand>
        <name>[2Fe-2S] cluster</name>
        <dbReference type="ChEBI" id="CHEBI:190135"/>
    </ligand>
</feature>
<feature type="binding site" evidence="3">
    <location>
        <position position="184"/>
    </location>
    <ligand>
        <name>[2Fe-2S] cluster</name>
        <dbReference type="ChEBI" id="CHEBI:190135"/>
    </ligand>
</feature>
<feature type="binding site" evidence="3">
    <location>
        <position position="187"/>
    </location>
    <ligand>
        <name>[2Fe-2S] cluster</name>
        <dbReference type="ChEBI" id="CHEBI:190135"/>
    </ligand>
</feature>
<feature type="binding site" evidence="2">
    <location>
        <position position="290"/>
    </location>
    <ligand>
        <name>Fe cation</name>
        <dbReference type="ChEBI" id="CHEBI:24875"/>
    </ligand>
</feature>
<feature type="binding site" evidence="2">
    <location>
        <position position="295"/>
    </location>
    <ligand>
        <name>Fe cation</name>
        <dbReference type="ChEBI" id="CHEBI:24875"/>
    </ligand>
</feature>
<organism>
    <name type="scientific">Amaranthus tricolor</name>
    <name type="common">Joseph's coat</name>
    <name type="synonym">Amaranthus gangeticus</name>
    <dbReference type="NCBI Taxonomy" id="29722"/>
    <lineage>
        <taxon>Eukaryota</taxon>
        <taxon>Viridiplantae</taxon>
        <taxon>Streptophyta</taxon>
        <taxon>Embryophyta</taxon>
        <taxon>Tracheophyta</taxon>
        <taxon>Spermatophyta</taxon>
        <taxon>Magnoliopsida</taxon>
        <taxon>eudicotyledons</taxon>
        <taxon>Gunneridae</taxon>
        <taxon>Pentapetalae</taxon>
        <taxon>Caryophyllales</taxon>
        <taxon>Amaranthaceae</taxon>
        <taxon>Amaranthus</taxon>
    </lineage>
</organism>